<name>CASK_BOVIN</name>
<comment type="function">
    <text>Kappa-casein stabilizes micelle formation, preventing casein precipitation in milk.</text>
</comment>
<comment type="function">
    <text>Casoxins A, B and C have opioid antagonist activity. Casoxin C causes biphasic ileal contractions through the binding to the complement C3a receptors.</text>
</comment>
<comment type="function">
    <text>Casoplatelin inhibits platelet aggregation.</text>
</comment>
<comment type="subunit">
    <text>Monomer or homomultimer; disulfide-linked.</text>
</comment>
<comment type="interaction">
    <interactant intactId="EBI-7234047">
        <id>P02668</id>
    </interactant>
    <interactant intactId="EBI-7234047">
        <id>P02668</id>
        <label>CSN3</label>
    </interactant>
    <organismsDiffer>false</organismsDiffer>
    <experiments>2</experiments>
</comment>
<comment type="interaction">
    <interactant intactId="EBI-7234047">
        <id>P02668</id>
    </interactant>
    <interactant intactId="EBI-7698530">
        <id>Q9RA63</id>
        <label>clpB</label>
    </interactant>
    <organismsDiffer>true</organismsDiffer>
    <experiments>3</experiments>
</comment>
<comment type="subcellular location">
    <subcellularLocation>
        <location>Secreted</location>
    </subcellularLocation>
</comment>
<comment type="tissue specificity">
    <text>Mammary gland specific. Secreted in milk.</text>
</comment>
<comment type="miscellaneous">
    <text>The sequence shown is the A variant.</text>
</comment>
<comment type="similarity">
    <text evidence="8">Belongs to the kappa-casein family.</text>
</comment>
<comment type="online information" name="Protein Spotlight">
    <link uri="https://www.proteinspotlight.org/back_issues/016"/>
    <text>Of buttons, digestion and glue - Issue 16 of November 2001</text>
</comment>
<reference key="1">
    <citation type="journal article" date="1984" name="Nucleic Acids Res.">
        <title>Nucleotide sequences of bovine alpha S1- and kappa-casein cDNAs.</title>
        <authorList>
            <person name="Stewart A.F."/>
            <person name="Willis I.M."/>
            <person name="Mackinlay A.G."/>
        </authorList>
    </citation>
    <scope>NUCLEOTIDE SEQUENCE [MRNA] (VARIANT A)</scope>
</reference>
<reference key="2">
    <citation type="journal article" date="1987" name="Genetika">
        <title>Nucleotide sequence of the cDNA of kappa casein in cows.</title>
        <authorList>
            <person name="Gorodetskii S.I."/>
            <person name="Kaledin A.S."/>
        </authorList>
    </citation>
    <scope>NUCLEOTIDE SEQUENCE [MRNA] (VARIANT B2)</scope>
</reference>
<reference key="3">
    <citation type="journal article" date="1988" name="Eur. J. Biochem.">
        <title>Isolation and characterization of the bovine kappa-casein gene.</title>
        <authorList>
            <person name="Alexander L.J."/>
            <person name="Stewart A.F."/>
            <person name="McKinlay A.G."/>
            <person name="Kapelinskaya T.V."/>
            <person name="Tkach T.M."/>
            <person name="Gorodetsky S.I."/>
        </authorList>
    </citation>
    <scope>NUCLEOTIDE SEQUENCE [GENOMIC DNA] (VARIANT A)</scope>
</reference>
<reference key="4">
    <citation type="journal article" date="2005" name="Anim. Genet.">
        <title>Polymorphism in the bovine kappa-casein (CSN3) gene and the 5'-flanking region: sequence analysis of CSN3 A and B alleles.</title>
        <authorList>
            <person name="Robitaille G."/>
            <person name="Britten M."/>
            <person name="Morisset J."/>
            <person name="Petitclerc D."/>
        </authorList>
    </citation>
    <scope>NUCLEOTIDE SEQUENCE [GENOMIC DNA] (VARIANTS A AND B)</scope>
    <source>
        <tissue>Blood</tissue>
    </source>
</reference>
<reference key="5">
    <citation type="submission" date="2005-08" db="EMBL/GenBank/DDBJ databases">
        <authorList>
            <consortium name="NIH - Mammalian Gene Collection (MGC) project"/>
        </authorList>
    </citation>
    <scope>NUCLEOTIDE SEQUENCE [LARGE SCALE MRNA] (VARIANT B)</scope>
    <source>
        <strain>Hereford</strain>
        <tissue>Mammary gland</tissue>
    </source>
</reference>
<reference key="6">
    <citation type="journal article" date="1973" name="Eur. J. Biochem.">
        <title>Primary structure of bovine kappa B casein. Complete sequence.</title>
        <authorList>
            <person name="Mercier J.-C."/>
            <person name="Brignon G."/>
            <person name="Ribadeau-Dumas B."/>
        </authorList>
    </citation>
    <scope>PROTEIN SEQUENCE OF 22-127 (VARIANT B)</scope>
</reference>
<reference key="7">
    <citation type="journal article" date="1972" name="Chimia">
        <title>Studies on the primary structure of cow kappa-casein. The primary sequence of cow para-kappa-casein.</title>
        <authorList>
            <person name="Jolles J."/>
            <person name="Schoentgen F."/>
            <person name="Alais C."/>
            <person name="Jolles P."/>
        </authorList>
    </citation>
    <scope>PROTEIN SEQUENCE OF 22-126 (VARIANT A)</scope>
</reference>
<reference key="8">
    <citation type="journal article" date="1992" name="Eur. J. Biochem.">
        <title>The multimeric structure and disulfide-bonding pattern of bovine kappa-casein.</title>
        <authorList>
            <person name="Rasmussen L.K."/>
            <person name="Hoejrup P."/>
            <person name="Petersen T.E."/>
        </authorList>
    </citation>
    <scope>PROTEIN SEQUENCE OF 22-38 AND 97-116</scope>
    <scope>PYROGLUTAMATE FORMATION AT GLN-22</scope>
    <scope>INTERCHAIN DISULFIDE BONDS</scope>
    <scope>IDENTIFICATION BY MASS SPECTROMETRY</scope>
</reference>
<reference key="9">
    <citation type="journal article" date="1982" name="DNA">
        <title>Construction and identification by partial nucleotide sequence analysis of bovine casein and beta-lactoglobulin cDNA clones.</title>
        <authorList>
            <person name="Willis I.M."/>
            <person name="Stewart A.F."/>
            <person name="Caputo A."/>
            <person name="Thompson A.R."/>
            <person name="McKinlay A.G."/>
        </authorList>
    </citation>
    <scope>NUCLEOTIDE SEQUENCE [MRNA] OF 31-45</scope>
</reference>
<reference key="10">
    <citation type="journal article" date="1996" name="Anim. Genet.">
        <title>Molecular genetic characterization of new bovine kappa-casein alleles CSN3F and CSN3G and genotyping by PCR-RFLP.</title>
        <authorList>
            <person name="Prinzenberg E.M."/>
            <person name="Hiendleder S."/>
            <person name="Ikonen T."/>
            <person name="Erhardt G."/>
        </authorList>
    </citation>
    <scope>NUCLEOTIDE SEQUENCE OF 31-190 (VARIANTS F AND G)</scope>
    <source>
        <strain>Ayrshire</strain>
        <strain>Pinzgauer</strain>
    </source>
</reference>
<reference key="11">
    <citation type="journal article" date="1999" name="Anim. Biotechnol.">
        <title>SSCP analysis at the bovine CSN3 locus discriminates six alleles corresponding to known protein variants (A, B, C, E, F, G) and three new DNA polymorphisms (H, I, A1).</title>
        <authorList>
            <person name="Prinzenberg E.M."/>
            <person name="Krause I."/>
            <person name="Erhardt G."/>
        </authorList>
    </citation>
    <scope>NUCLEOTIDE SEQUENCE [GENOMIC DNA] OF 31-190 (VARIANT H)</scope>
    <source>
        <strain>Pinzgauer</strain>
    </source>
</reference>
<reference key="12">
    <citation type="journal article" date="1994" name="Appl. Environ. Microbiol.">
        <title>Specificity of hydrolysis of bovine kappa-casein by cell envelope-associated proteinases from Lactococcus lactis strains.</title>
        <authorList>
            <person name="Reid J.R."/>
            <person name="Coolbear T."/>
            <person name="Pillidge C.J."/>
            <person name="Pritchard G.G."/>
        </authorList>
    </citation>
    <scope>PROTEIN SEQUENCE OF 54-59</scope>
</reference>
<reference key="13">
    <citation type="journal article" date="1983" name="Bioorg. Khim.">
        <title>Primary structure of cDNA of Bos taurus kappa-casein macropeptide.</title>
        <authorList>
            <person name="Gorodetskii S.I."/>
            <person name="Kershulyte D.R."/>
            <person name="Korobko V.G."/>
        </authorList>
    </citation>
    <scope>NUCLEOTIDE SEQUENCE [MRNA] OF 92-190 (VARIANT B2)</scope>
</reference>
<reference key="14">
    <citation type="journal article" date="1972" name="Helv. Chim. Acta">
        <title>Studies on the primary structure of cow kappa-casein. Structural features of para-kappa-casein; N-terminal sequence of kappa-caseinoglycopeptide studied with a sequencer.</title>
        <authorList>
            <person name="Jolles J."/>
            <person name="Schoentgen F."/>
            <person name="Alais C."/>
            <person name="Fiat A.-M."/>
            <person name="Jolles P."/>
        </authorList>
    </citation>
    <scope>PARTIAL PROTEIN SEQUENCE (VARIANT A)</scope>
</reference>
<reference key="15">
    <citation type="journal article" date="1974" name="Biochim. Biophys. Acta">
        <title>Kappa-casein from bovine colostrum.</title>
        <authorList>
            <person name="Guerin J."/>
            <person name="Alais C."/>
            <person name="Jolles J."/>
            <person name="Jolles P."/>
        </authorList>
    </citation>
    <scope>PROTEIN SEQUENCE OF 127-168 AND 187-190</scope>
    <source>
        <tissue>Colostrum</tissue>
    </source>
</reference>
<reference key="16">
    <citation type="journal article" date="1972" name="Ann. Genet. Sel. Anim.">
        <title>Localization of amino-acid substitutions that differenciate bovine kappa-casein variants A and B.</title>
        <authorList>
            <person name="Grosclaude F."/>
            <person name="Mahe M.-F."/>
            <person name="Mercier J.-C."/>
            <person name="Ribadeau-Dumas B."/>
        </authorList>
    </citation>
    <scope>PROTEIN SEQUENCE OF 128-190 (VARIANTS A AND B)</scope>
</reference>
<reference key="17">
    <citation type="journal article" date="1991" name="Anim. Genet.">
        <title>Genotyping of bovine kappa-casein (kappa-CNA, kappa-CNB, kappa-CNC, kappa-CNE) following DNA sequence amplification and direct sequencing of kappa-CNE PCR product.</title>
        <authorList>
            <person name="Schlieben S."/>
            <person name="Erhardt G."/>
            <person name="Senft B."/>
        </authorList>
    </citation>
    <scope>NUCLEOTIDE SEQUENCE OF 133-190 (VARIANT E)</scope>
</reference>
<reference key="18">
    <citation type="submission" date="1997-02" db="EMBL/GenBank/DDBJ databases">
        <authorList>
            <person name="Woollard J.R."/>
            <person name="Dentine M.R."/>
        </authorList>
    </citation>
    <scope>NUCLEOTIDE SEQUENCE OF 133-190 (VARIANTS A AND B)</scope>
</reference>
<reference key="19">
    <citation type="journal article" date="1994" name="Glycobiology">
        <title>Characterization of O-linked glycosylation motifs in the glycopeptide domain of bovine kappa-casein.</title>
        <authorList>
            <person name="Pisano A."/>
            <person name="Packer N.H."/>
            <person name="Redmond J.W."/>
            <person name="Williams K.L."/>
            <person name="Gooley A.A."/>
        </authorList>
    </citation>
    <scope>GLYCOSYLATION AT THR-142; THR-152; THR-154; THR-157; THR-163 AND THR-186</scope>
</reference>
<reference key="20">
    <citation type="journal article" date="1996" name="J. Chromatogr. A">
        <title>Reversed-phase high-performance liquid chromatographic separation of bovine kappa-casein macropeptide and characterization of isolated fractions.</title>
        <authorList>
            <person name="Minkiewicz P."/>
            <person name="Slangen C.J."/>
            <person name="Lagerwerf F.M."/>
            <person name="Haverkamp J."/>
            <person name="Rollema H.S."/>
            <person name="Visser S."/>
        </authorList>
    </citation>
    <scope>GLYCOSYLATION AT THR-142; THR-152; THR-154; THR-157; THR-163 AND THR-186</scope>
    <scope>PHOSPHORYLATION AT SER-148 AND SER-170</scope>
</reference>
<reference key="21">
    <citation type="journal article" date="1989" name="J. Dairy Res.">
        <title>Opioid antagonist peptides derived from kappa-casein.</title>
        <authorList>
            <person name="Chiba H."/>
            <person name="Tani F."/>
            <person name="Yoshikawa M."/>
        </authorList>
    </citation>
    <scope>ACTIVITY OF CASOXINS</scope>
</reference>
<reference key="22">
    <citation type="journal article" date="1986" name="Eur. J. Biochem.">
        <title>Analogy between fibrinogen and casein. Effect of an undecapeptide isolated from kappa-casein on platelet function.</title>
        <authorList>
            <person name="Jolles P."/>
            <person name="Levy-Toledano S."/>
            <person name="Fiat A.-M."/>
            <person name="Soria C."/>
            <person name="Gillessen D."/>
            <person name="Thomaidis A."/>
            <person name="Dunn F.W."/>
            <person name="Caen J.P."/>
        </authorList>
    </citation>
    <scope>ACTIVITY OF CASOPLATELIN</scope>
</reference>
<reference key="23">
    <citation type="journal article" date="2014" name="J. Chromatogr. A">
        <title>Identification of protein O-glycosylation site and corresponding glycans using liquid chromatography-tandem mass spectrometry via mapping accurate mass and retention time shift.</title>
        <authorList>
            <person name="Huang L.J."/>
            <person name="Lin J.H."/>
            <person name="Tsai J.H."/>
            <person name="Chu Y.Y."/>
            <person name="Chen Y.W."/>
            <person name="Chen S.L."/>
            <person name="Chen S.H."/>
        </authorList>
    </citation>
    <scope>GLYCOSYLATION AT THR-142; THR-152; SER-153; THR-154; THR-157; THR-163; SER-170 AND THR-186</scope>
    <scope>PHOSPHORYLATION AT THR-166 AND SER-170</scope>
    <scope>IDENTIFICATION BY MASS SPECTROMETRY</scope>
</reference>
<dbReference type="EMBL" id="X00565">
    <property type="protein sequence ID" value="CAA25231.1"/>
    <property type="molecule type" value="mRNA"/>
</dbReference>
<dbReference type="EMBL" id="M36641">
    <property type="protein sequence ID" value="AAA30433.1"/>
    <property type="molecule type" value="mRNA"/>
</dbReference>
<dbReference type="EMBL" id="X14907">
    <property type="protein sequence ID" value="CAA33034.1"/>
    <property type="molecule type" value="Genomic_DNA"/>
</dbReference>
<dbReference type="EMBL" id="X14908">
    <property type="protein sequence ID" value="CAA33034.1"/>
    <property type="status" value="JOINED"/>
    <property type="molecule type" value="Genomic_DNA"/>
</dbReference>
<dbReference type="EMBL" id="AY380228">
    <property type="protein sequence ID" value="AAQ87922.1"/>
    <property type="molecule type" value="Genomic_DNA"/>
</dbReference>
<dbReference type="EMBL" id="AY380229">
    <property type="protein sequence ID" value="AAQ87923.1"/>
    <property type="molecule type" value="Genomic_DNA"/>
</dbReference>
<dbReference type="EMBL" id="BC102120">
    <property type="protein sequence ID" value="AAI02121.1"/>
    <property type="molecule type" value="mRNA"/>
</dbReference>
<dbReference type="EMBL" id="K01085">
    <property type="protein sequence ID" value="AAA30482.1"/>
    <property type="molecule type" value="mRNA"/>
</dbReference>
<dbReference type="EMBL" id="AF123250">
    <property type="protein sequence ID" value="AAD32139.1"/>
    <property type="molecule type" value="Genomic_DNA"/>
</dbReference>
<dbReference type="EMBL" id="AF123251">
    <property type="protein sequence ID" value="AAD32140.1"/>
    <property type="molecule type" value="Genomic_DNA"/>
</dbReference>
<dbReference type="EMBL" id="AF105260">
    <property type="protein sequence ID" value="AAF72097.1"/>
    <property type="molecule type" value="Genomic_DNA"/>
</dbReference>
<dbReference type="EMBL" id="M38333">
    <property type="protein sequence ID" value="AAA30432.1"/>
    <property type="molecule type" value="mRNA"/>
</dbReference>
<dbReference type="EMBL" id="AF041482">
    <property type="protein sequence ID" value="AAB97519.1"/>
    <property type="molecule type" value="Genomic_DNA"/>
</dbReference>
<dbReference type="EMBL" id="U84250">
    <property type="protein sequence ID" value="AAB47260.1"/>
    <property type="molecule type" value="Genomic_DNA"/>
</dbReference>
<dbReference type="EMBL" id="U84251">
    <property type="protein sequence ID" value="AAB47261.1"/>
    <property type="molecule type" value="Genomic_DNA"/>
</dbReference>
<dbReference type="PIR" id="S02076">
    <property type="entry name" value="KKBOB"/>
</dbReference>
<dbReference type="RefSeq" id="NP_776719.1">
    <property type="nucleotide sequence ID" value="NM_174294.2"/>
</dbReference>
<dbReference type="BioGRID" id="159044">
    <property type="interactions" value="3"/>
</dbReference>
<dbReference type="FunCoup" id="P02668">
    <property type="interactions" value="21"/>
</dbReference>
<dbReference type="IntAct" id="P02668">
    <property type="interactions" value="1"/>
</dbReference>
<dbReference type="MINT" id="P02668"/>
<dbReference type="STRING" id="9913.ENSBTAP00000028685"/>
<dbReference type="Allergome" id="10200">
    <property type="allergen name" value="Bos d 12.0101"/>
</dbReference>
<dbReference type="Allergome" id="167">
    <property type="allergen name" value="Bos d 8"/>
</dbReference>
<dbReference type="Allergome" id="2737">
    <property type="allergen name" value="Bos d 12"/>
</dbReference>
<dbReference type="CarbonylDB" id="P02668"/>
<dbReference type="GlyConnect" id="309">
    <property type="glycosylation" value="19 O-Linked glycans (7 sites)"/>
</dbReference>
<dbReference type="GlyCosmos" id="P02668">
    <property type="glycosylation" value="8 sites, 20 glycans"/>
</dbReference>
<dbReference type="GlyGen" id="P02668">
    <property type="glycosylation" value="9 sites, 21 O-linked glycans (8 sites)"/>
</dbReference>
<dbReference type="iPTMnet" id="P02668"/>
<dbReference type="PaxDb" id="9913-ENSBTAP00000028685"/>
<dbReference type="PeptideAtlas" id="P02668"/>
<dbReference type="GeneID" id="281728"/>
<dbReference type="KEGG" id="bta:281728"/>
<dbReference type="CTD" id="1448"/>
<dbReference type="eggNOG" id="ENOG502TM2T">
    <property type="taxonomic scope" value="Eukaryota"/>
</dbReference>
<dbReference type="HOGENOM" id="CLU_103388_0_0_1"/>
<dbReference type="InParanoid" id="P02668"/>
<dbReference type="OrthoDB" id="9836334at2759"/>
<dbReference type="TreeFam" id="TF338369"/>
<dbReference type="Proteomes" id="UP000009136">
    <property type="component" value="Unplaced"/>
</dbReference>
<dbReference type="GO" id="GO:0005615">
    <property type="term" value="C:extracellular space"/>
    <property type="evidence" value="ECO:0000314"/>
    <property type="project" value="AgBase"/>
</dbReference>
<dbReference type="GO" id="GO:0005794">
    <property type="term" value="C:Golgi apparatus"/>
    <property type="evidence" value="ECO:0000314"/>
    <property type="project" value="AgBase"/>
</dbReference>
<dbReference type="GO" id="GO:0005796">
    <property type="term" value="C:Golgi lumen"/>
    <property type="evidence" value="ECO:0000314"/>
    <property type="project" value="AgBase"/>
</dbReference>
<dbReference type="GO" id="GO:0042802">
    <property type="term" value="F:identical protein binding"/>
    <property type="evidence" value="ECO:0000353"/>
    <property type="project" value="IntAct"/>
</dbReference>
<dbReference type="GO" id="GO:0035375">
    <property type="term" value="F:zymogen binding"/>
    <property type="evidence" value="ECO:0000353"/>
    <property type="project" value="AgBase"/>
</dbReference>
<dbReference type="GO" id="GO:0007595">
    <property type="term" value="P:lactation"/>
    <property type="evidence" value="ECO:0000318"/>
    <property type="project" value="GO_Central"/>
</dbReference>
<dbReference type="GO" id="GO:0050821">
    <property type="term" value="P:protein stabilization"/>
    <property type="evidence" value="ECO:0000318"/>
    <property type="project" value="GO_Central"/>
</dbReference>
<dbReference type="GO" id="GO:1903496">
    <property type="term" value="P:response to 11-deoxycorticosterone"/>
    <property type="evidence" value="ECO:0000314"/>
    <property type="project" value="AgBase"/>
</dbReference>
<dbReference type="GO" id="GO:1903494">
    <property type="term" value="P:response to dehydroepiandrosterone"/>
    <property type="evidence" value="ECO:0000314"/>
    <property type="project" value="AgBase"/>
</dbReference>
<dbReference type="GO" id="GO:0032355">
    <property type="term" value="P:response to estradiol"/>
    <property type="evidence" value="ECO:0000314"/>
    <property type="project" value="AgBase"/>
</dbReference>
<dbReference type="GO" id="GO:0032570">
    <property type="term" value="P:response to progesterone"/>
    <property type="evidence" value="ECO:0000314"/>
    <property type="project" value="AgBase"/>
</dbReference>
<dbReference type="InterPro" id="IPR000117">
    <property type="entry name" value="Casein_kappa"/>
</dbReference>
<dbReference type="PANTHER" id="PTHR11470">
    <property type="entry name" value="KAPPA CASEIN"/>
    <property type="match status" value="1"/>
</dbReference>
<dbReference type="PANTHER" id="PTHR11470:SF2">
    <property type="entry name" value="KAPPA-CASEIN"/>
    <property type="match status" value="1"/>
</dbReference>
<dbReference type="Pfam" id="PF00997">
    <property type="entry name" value="Casein_kappa"/>
    <property type="match status" value="1"/>
</dbReference>
<dbReference type="PIRSF" id="PIRSF002374">
    <property type="entry name" value="Casein_kappa"/>
    <property type="match status" value="1"/>
</dbReference>
<feature type="signal peptide" evidence="2 4 7">
    <location>
        <begin position="1"/>
        <end position="21"/>
    </location>
</feature>
<feature type="chain" id="PRO_0000004483" description="Kappa-casein">
    <location>
        <begin position="22"/>
        <end position="190"/>
    </location>
</feature>
<feature type="peptide" id="PRO_0000004484" description="Casoxin-C">
    <location>
        <begin position="46"/>
        <end position="55"/>
    </location>
</feature>
<feature type="peptide" id="PRO_0000004485" description="Casoxin-6">
    <location>
        <begin position="54"/>
        <end position="59"/>
    </location>
</feature>
<feature type="peptide" id="PRO_0000004486" description="Casoxin-A">
    <location>
        <begin position="56"/>
        <end position="62"/>
    </location>
</feature>
<feature type="peptide" id="PRO_0000004487" description="Casoxin-B">
    <location>
        <begin position="79"/>
        <end position="82"/>
    </location>
</feature>
<feature type="peptide" id="PRO_0000004488" description="Casoplatelin">
    <location>
        <begin position="127"/>
        <end position="137"/>
    </location>
</feature>
<feature type="site" description="Cleavage; by chymosin/rennin">
    <location>
        <begin position="126"/>
        <end position="127"/>
    </location>
</feature>
<feature type="modified residue" description="Pyrrolidone carboxylic acid" evidence="2">
    <location>
        <position position="22"/>
    </location>
</feature>
<feature type="modified residue" description="Phosphoserine" evidence="6">
    <location>
        <position position="148"/>
    </location>
</feature>
<feature type="modified residue" description="Phosphothreonine" evidence="3">
    <location>
        <position position="166"/>
    </location>
</feature>
<feature type="modified residue" description="Phosphoserine; alternate" evidence="3 6">
    <location>
        <position position="170"/>
    </location>
</feature>
<feature type="modified residue" description="Phosphoserine" evidence="1">
    <location>
        <position position="187"/>
    </location>
</feature>
<feature type="glycosylation site" description="O-linked (GalNAc...) threonine" evidence="3 5 6">
    <location>
        <position position="142"/>
    </location>
</feature>
<feature type="glycosylation site" description="O-linked (GalNAc...) threonine" evidence="3 5 6">
    <location>
        <position position="152"/>
    </location>
</feature>
<feature type="glycosylation site" description="O-linked (GalNAc...) serine" evidence="3">
    <location>
        <position position="153"/>
    </location>
</feature>
<feature type="glycosylation site" description="O-linked (GalNAc...) threonine" evidence="3 5 6">
    <location>
        <position position="154"/>
    </location>
</feature>
<feature type="glycosylation site" description="O-linked (GalNAc...) threonine" evidence="3 5 6">
    <location>
        <position position="157"/>
    </location>
</feature>
<feature type="glycosylation site" description="O-linked (GalNAc...) threonine" evidence="3 5 6">
    <location>
        <position position="163"/>
    </location>
</feature>
<feature type="glycosylation site" description="O-linked (GalNAc...) serine; alternate" evidence="3">
    <location>
        <position position="170"/>
    </location>
</feature>
<feature type="glycosylation site" description="O-linked (GalNAc...) threonine; partial" evidence="3 5 6">
    <location>
        <position position="186"/>
    </location>
</feature>
<feature type="disulfide bond">
    <location>
        <begin position="32"/>
        <end position="109"/>
    </location>
</feature>
<feature type="disulfide bond" description="Interchain (with C-109); in linked form">
    <location>
        <position position="32"/>
    </location>
</feature>
<feature type="disulfide bond" description="Interchain (with C-32); in linked form">
    <location>
        <position position="109"/>
    </location>
</feature>
<feature type="sequence variant" description="In variant F.">
    <original>R</original>
    <variation>H</variation>
    <location>
        <position position="31"/>
    </location>
</feature>
<feature type="sequence variant" description="In variant G.">
    <original>R</original>
    <variation>C</variation>
    <location>
        <position position="118"/>
    </location>
</feature>
<feature type="sequence variant" description="In variant G and variant H.">
    <original>T</original>
    <variation>I</variation>
    <location>
        <position position="156"/>
    </location>
</feature>
<feature type="sequence variant" description="In variant B and variant B2.">
    <original>T</original>
    <variation>I</variation>
    <location>
        <position position="157"/>
    </location>
</feature>
<feature type="sequence variant" description="In variant B and variant B2.">
    <original>D</original>
    <variation>A</variation>
    <location>
        <position position="169"/>
    </location>
</feature>
<feature type="sequence variant" description="In variant B2.">
    <original>I</original>
    <variation>T</variation>
    <location>
        <position position="174"/>
    </location>
</feature>
<feature type="sequence variant" description="In variant E.">
    <original>S</original>
    <variation>G</variation>
    <location>
        <position position="176"/>
    </location>
</feature>
<feature type="sequence conflict" description="In Ref. 7; AA sequence." evidence="8" ref="7">
    <original>E</original>
    <variation>Q</variation>
    <location>
        <position position="23"/>
    </location>
</feature>
<feature type="sequence conflict" description="In Ref. 7; AA sequence." evidence="8" ref="7">
    <original>Q</original>
    <variation>E</variation>
    <location>
        <position position="26"/>
    </location>
</feature>
<feature type="sequence conflict" description="In Ref. 7; AA sequence." evidence="8" ref="7">
    <original>Q</original>
    <variation>E</variation>
    <location>
        <position position="28"/>
    </location>
</feature>
<feature type="sequence conflict" description="In Ref. 6; AA sequence." evidence="8" ref="6">
    <original>N</original>
    <variation>D</variation>
    <location>
        <position position="102"/>
    </location>
</feature>
<keyword id="KW-0903">Direct protein sequencing</keyword>
<keyword id="KW-1015">Disulfide bond</keyword>
<keyword id="KW-0325">Glycoprotein</keyword>
<keyword id="KW-0494">Milk protein</keyword>
<keyword id="KW-0597">Phosphoprotein</keyword>
<keyword id="KW-0873">Pyrrolidone carboxylic acid</keyword>
<keyword id="KW-1185">Reference proteome</keyword>
<keyword id="KW-0964">Secreted</keyword>
<keyword id="KW-0732">Signal</keyword>
<sequence>MMKSFFLVVTILALTLPFLGAQEQNQEQPIRCEKDERFFSDKIAKYIPIQYVLSRYPSYGLNYYQQKPVALINNQFLPYPYYAKPAAVRSPAQILQWQVLSNTVPAKSCQAQPTTMARHPHPHLSFMAIPPKKNQDKTEIPTINTIASGEPTSTPTTEAVESTVATLEDSPEVIESPPEINTVQVTSTAV</sequence>
<proteinExistence type="evidence at protein level"/>
<organism>
    <name type="scientific">Bos taurus</name>
    <name type="common">Bovine</name>
    <dbReference type="NCBI Taxonomy" id="9913"/>
    <lineage>
        <taxon>Eukaryota</taxon>
        <taxon>Metazoa</taxon>
        <taxon>Chordata</taxon>
        <taxon>Craniata</taxon>
        <taxon>Vertebrata</taxon>
        <taxon>Euteleostomi</taxon>
        <taxon>Mammalia</taxon>
        <taxon>Eutheria</taxon>
        <taxon>Laurasiatheria</taxon>
        <taxon>Artiodactyla</taxon>
        <taxon>Ruminantia</taxon>
        <taxon>Pecora</taxon>
        <taxon>Bovidae</taxon>
        <taxon>Bovinae</taxon>
        <taxon>Bos</taxon>
    </lineage>
</organism>
<evidence type="ECO:0000250" key="1">
    <source>
        <dbReference type="UniProtKB" id="P02670"/>
    </source>
</evidence>
<evidence type="ECO:0000269" key="2">
    <source>
    </source>
</evidence>
<evidence type="ECO:0000269" key="3">
    <source>
    </source>
</evidence>
<evidence type="ECO:0000269" key="4">
    <source>
    </source>
</evidence>
<evidence type="ECO:0000269" key="5">
    <source>
    </source>
</evidence>
<evidence type="ECO:0000269" key="6">
    <source>
    </source>
</evidence>
<evidence type="ECO:0000269" key="7">
    <source ref="7"/>
</evidence>
<evidence type="ECO:0000305" key="8"/>
<protein>
    <recommendedName>
        <fullName>Kappa-casein</fullName>
    </recommendedName>
    <component>
        <recommendedName>
            <fullName>Casoxin-C</fullName>
        </recommendedName>
    </component>
    <component>
        <recommendedName>
            <fullName>Casoxin-6</fullName>
        </recommendedName>
    </component>
    <component>
        <recommendedName>
            <fullName>Casoxin-A</fullName>
        </recommendedName>
    </component>
    <component>
        <recommendedName>
            <fullName>Casoxin-B</fullName>
        </recommendedName>
    </component>
    <component>
        <recommendedName>
            <fullName>Casoplatelin</fullName>
        </recommendedName>
    </component>
</protein>
<gene>
    <name type="primary">CSN3</name>
    <name type="synonym">CSN10</name>
    <name type="synonym">CSNK</name>
</gene>
<accession>P02668</accession>
<accession>O46566</accession>
<accession>Q597F3</accession>
<accession>Q6U205</accession>
<accession>Q9N271</accession>
<accession>Q9TRQ3</accession>
<accession>Q9TV96</accession>
<accession>Q9TV97</accession>